<keyword id="KW-0131">Cell cycle</keyword>
<keyword id="KW-0132">Cell division</keyword>
<keyword id="KW-0342">GTP-binding</keyword>
<keyword id="KW-0460">Magnesium</keyword>
<keyword id="KW-0479">Metal-binding</keyword>
<keyword id="KW-0547">Nucleotide-binding</keyword>
<keyword id="KW-0717">Septation</keyword>
<name>ENGB_NEIMA</name>
<organism>
    <name type="scientific">Neisseria meningitidis serogroup A / serotype 4A (strain DSM 15465 / Z2491)</name>
    <dbReference type="NCBI Taxonomy" id="122587"/>
    <lineage>
        <taxon>Bacteria</taxon>
        <taxon>Pseudomonadati</taxon>
        <taxon>Pseudomonadota</taxon>
        <taxon>Betaproteobacteria</taxon>
        <taxon>Neisseriales</taxon>
        <taxon>Neisseriaceae</taxon>
        <taxon>Neisseria</taxon>
    </lineage>
</organism>
<protein>
    <recommendedName>
        <fullName evidence="1">Probable GTP-binding protein EngB</fullName>
    </recommendedName>
</protein>
<gene>
    <name evidence="1" type="primary">engB</name>
    <name type="ordered locus">NMA0656</name>
</gene>
<accession>Q9JVW1</accession>
<accession>A1IQ91</accession>
<feature type="chain" id="PRO_0000157767" description="Probable GTP-binding protein EngB">
    <location>
        <begin position="1"/>
        <end position="209"/>
    </location>
</feature>
<feature type="domain" description="EngB-type G" evidence="1">
    <location>
        <begin position="22"/>
        <end position="198"/>
    </location>
</feature>
<feature type="binding site" evidence="1">
    <location>
        <position position="37"/>
    </location>
    <ligand>
        <name>Mg(2+)</name>
        <dbReference type="ChEBI" id="CHEBI:18420"/>
    </ligand>
</feature>
<feature type="binding site" evidence="1">
    <location>
        <position position="59"/>
    </location>
    <ligand>
        <name>Mg(2+)</name>
        <dbReference type="ChEBI" id="CHEBI:18420"/>
    </ligand>
</feature>
<reference key="1">
    <citation type="journal article" date="2000" name="Nature">
        <title>Complete DNA sequence of a serogroup A strain of Neisseria meningitidis Z2491.</title>
        <authorList>
            <person name="Parkhill J."/>
            <person name="Achtman M."/>
            <person name="James K.D."/>
            <person name="Bentley S.D."/>
            <person name="Churcher C.M."/>
            <person name="Klee S.R."/>
            <person name="Morelli G."/>
            <person name="Basham D."/>
            <person name="Brown D."/>
            <person name="Chillingworth T."/>
            <person name="Davies R.M."/>
            <person name="Davis P."/>
            <person name="Devlin K."/>
            <person name="Feltwell T."/>
            <person name="Hamlin N."/>
            <person name="Holroyd S."/>
            <person name="Jagels K."/>
            <person name="Leather S."/>
            <person name="Moule S."/>
            <person name="Mungall K.L."/>
            <person name="Quail M.A."/>
            <person name="Rajandream M.A."/>
            <person name="Rutherford K.M."/>
            <person name="Simmonds M."/>
            <person name="Skelton J."/>
            <person name="Whitehead S."/>
            <person name="Spratt B.G."/>
            <person name="Barrell B.G."/>
        </authorList>
    </citation>
    <scope>NUCLEOTIDE SEQUENCE [LARGE SCALE GENOMIC DNA]</scope>
    <source>
        <strain>DSM 15465 / Z2491</strain>
    </source>
</reference>
<dbReference type="EMBL" id="AL157959">
    <property type="protein sequence ID" value="CAM07919.1"/>
    <property type="molecule type" value="Genomic_DNA"/>
</dbReference>
<dbReference type="PIR" id="G81985">
    <property type="entry name" value="G81985"/>
</dbReference>
<dbReference type="SMR" id="Q9JVW1"/>
<dbReference type="EnsemblBacteria" id="CAM07919">
    <property type="protein sequence ID" value="CAM07919"/>
    <property type="gene ID" value="NMA0656"/>
</dbReference>
<dbReference type="KEGG" id="nma:NMA0656"/>
<dbReference type="HOGENOM" id="CLU_033732_1_0_4"/>
<dbReference type="Proteomes" id="UP000000626">
    <property type="component" value="Chromosome"/>
</dbReference>
<dbReference type="GO" id="GO:0005829">
    <property type="term" value="C:cytosol"/>
    <property type="evidence" value="ECO:0007669"/>
    <property type="project" value="TreeGrafter"/>
</dbReference>
<dbReference type="GO" id="GO:0005525">
    <property type="term" value="F:GTP binding"/>
    <property type="evidence" value="ECO:0007669"/>
    <property type="project" value="UniProtKB-UniRule"/>
</dbReference>
<dbReference type="GO" id="GO:0046872">
    <property type="term" value="F:metal ion binding"/>
    <property type="evidence" value="ECO:0007669"/>
    <property type="project" value="UniProtKB-KW"/>
</dbReference>
<dbReference type="GO" id="GO:0000917">
    <property type="term" value="P:division septum assembly"/>
    <property type="evidence" value="ECO:0007669"/>
    <property type="project" value="UniProtKB-KW"/>
</dbReference>
<dbReference type="CDD" id="cd01876">
    <property type="entry name" value="YihA_EngB"/>
    <property type="match status" value="1"/>
</dbReference>
<dbReference type="FunFam" id="3.40.50.300:FF:000098">
    <property type="entry name" value="Probable GTP-binding protein EngB"/>
    <property type="match status" value="1"/>
</dbReference>
<dbReference type="Gene3D" id="3.40.50.300">
    <property type="entry name" value="P-loop containing nucleotide triphosphate hydrolases"/>
    <property type="match status" value="1"/>
</dbReference>
<dbReference type="HAMAP" id="MF_00321">
    <property type="entry name" value="GTPase_EngB"/>
    <property type="match status" value="1"/>
</dbReference>
<dbReference type="InterPro" id="IPR030393">
    <property type="entry name" value="G_ENGB_dom"/>
</dbReference>
<dbReference type="InterPro" id="IPR006073">
    <property type="entry name" value="GTP-bd"/>
</dbReference>
<dbReference type="InterPro" id="IPR019987">
    <property type="entry name" value="GTP-bd_ribosome_bio_YsxC"/>
</dbReference>
<dbReference type="InterPro" id="IPR027417">
    <property type="entry name" value="P-loop_NTPase"/>
</dbReference>
<dbReference type="NCBIfam" id="TIGR03598">
    <property type="entry name" value="GTPase_YsxC"/>
    <property type="match status" value="1"/>
</dbReference>
<dbReference type="PANTHER" id="PTHR11649:SF13">
    <property type="entry name" value="ENGB-TYPE G DOMAIN-CONTAINING PROTEIN"/>
    <property type="match status" value="1"/>
</dbReference>
<dbReference type="PANTHER" id="PTHR11649">
    <property type="entry name" value="MSS1/TRME-RELATED GTP-BINDING PROTEIN"/>
    <property type="match status" value="1"/>
</dbReference>
<dbReference type="Pfam" id="PF01926">
    <property type="entry name" value="MMR_HSR1"/>
    <property type="match status" value="1"/>
</dbReference>
<dbReference type="SUPFAM" id="SSF52540">
    <property type="entry name" value="P-loop containing nucleoside triphosphate hydrolases"/>
    <property type="match status" value="1"/>
</dbReference>
<dbReference type="PROSITE" id="PS51706">
    <property type="entry name" value="G_ENGB"/>
    <property type="match status" value="1"/>
</dbReference>
<comment type="function">
    <text evidence="1">Necessary for normal cell division and for the maintenance of normal septation.</text>
</comment>
<comment type="cofactor">
    <cofactor evidence="1">
        <name>Mg(2+)</name>
        <dbReference type="ChEBI" id="CHEBI:18420"/>
    </cofactor>
</comment>
<comment type="similarity">
    <text evidence="1">Belongs to the TRAFAC class TrmE-Era-EngA-EngB-Septin-like GTPase superfamily. EngB GTPase family.</text>
</comment>
<evidence type="ECO:0000255" key="1">
    <source>
        <dbReference type="HAMAP-Rule" id="MF_00321"/>
    </source>
</evidence>
<sequence>MNLFQNAKFFTTVNHLKDLPDTPLEIAFVGRSNAGKSSAINTLTNHVRLAYVSKTPGRTQHINFFELQNGNFMVDLPGYGYAQVPEAVRAHWVNLLGDYLQQRKQLIGLVLIMDARHPLKELDIRMLDFFHTTGRPVHILLSKADKLSKNEQIKTLSQVKKLLKPYSDRQNISVQLFSSLKKQGIDEANRTVGSWFDAADAAASSPKEN</sequence>
<proteinExistence type="inferred from homology"/>